<evidence type="ECO:0000255" key="1">
    <source>
        <dbReference type="PROSITE-ProRule" id="PRU00441"/>
    </source>
</evidence>
<evidence type="ECO:0000269" key="2">
    <source>
    </source>
</evidence>
<evidence type="ECO:0000269" key="3">
    <source>
    </source>
</evidence>
<evidence type="ECO:0000269" key="4">
    <source>
    </source>
</evidence>
<evidence type="ECO:0000269" key="5">
    <source>
    </source>
</evidence>
<evidence type="ECO:0000269" key="6">
    <source>
    </source>
</evidence>
<evidence type="ECO:0000269" key="7">
    <source>
    </source>
</evidence>
<evidence type="ECO:0000269" key="8">
    <source>
    </source>
</evidence>
<evidence type="ECO:0000303" key="9">
    <source>
    </source>
</evidence>
<evidence type="ECO:0000305" key="10"/>
<evidence type="ECO:0007829" key="11">
    <source>
        <dbReference type="PDB" id="2R6G"/>
    </source>
</evidence>
<evidence type="ECO:0007829" key="12">
    <source>
        <dbReference type="PDB" id="3PUV"/>
    </source>
</evidence>
<evidence type="ECO:0007829" key="13">
    <source>
        <dbReference type="PDB" id="3PUW"/>
    </source>
</evidence>
<evidence type="ECO:0007829" key="14">
    <source>
        <dbReference type="PDB" id="3PV0"/>
    </source>
</evidence>
<evidence type="ECO:0007829" key="15">
    <source>
        <dbReference type="PDB" id="3RLF"/>
    </source>
</evidence>
<accession>P02916</accession>
<accession>Q2M6S1</accession>
<organism>
    <name type="scientific">Escherichia coli (strain K12)</name>
    <dbReference type="NCBI Taxonomy" id="83333"/>
    <lineage>
        <taxon>Bacteria</taxon>
        <taxon>Pseudomonadati</taxon>
        <taxon>Pseudomonadota</taxon>
        <taxon>Gammaproteobacteria</taxon>
        <taxon>Enterobacterales</taxon>
        <taxon>Enterobacteriaceae</taxon>
        <taxon>Escherichia</taxon>
    </lineage>
</organism>
<dbReference type="EMBL" id="J01648">
    <property type="protein sequence ID" value="AAB59055.1"/>
    <property type="molecule type" value="Genomic_DNA"/>
</dbReference>
<dbReference type="EMBL" id="U00006">
    <property type="protein sequence ID" value="AAC43127.1"/>
    <property type="molecule type" value="Genomic_DNA"/>
</dbReference>
<dbReference type="EMBL" id="U00096">
    <property type="protein sequence ID" value="AAC77003.1"/>
    <property type="molecule type" value="Genomic_DNA"/>
</dbReference>
<dbReference type="EMBL" id="AP009048">
    <property type="protein sequence ID" value="BAE78035.1"/>
    <property type="molecule type" value="Genomic_DNA"/>
</dbReference>
<dbReference type="EMBL" id="X02871">
    <property type="protein sequence ID" value="CAA26627.1"/>
    <property type="molecule type" value="Genomic_DNA"/>
</dbReference>
<dbReference type="PIR" id="A03414">
    <property type="entry name" value="MMECMF"/>
</dbReference>
<dbReference type="RefSeq" id="NP_418457.1">
    <property type="nucleotide sequence ID" value="NC_000913.3"/>
</dbReference>
<dbReference type="RefSeq" id="WP_001297290.1">
    <property type="nucleotide sequence ID" value="NZ_STEB01000022.1"/>
</dbReference>
<dbReference type="PDB" id="2R6G">
    <property type="method" value="X-ray"/>
    <property type="resolution" value="2.80 A"/>
    <property type="chains" value="F=1-514"/>
</dbReference>
<dbReference type="PDB" id="3FH6">
    <property type="method" value="X-ray"/>
    <property type="resolution" value="4.50 A"/>
    <property type="chains" value="F/H=36-514"/>
</dbReference>
<dbReference type="PDB" id="3PUV">
    <property type="method" value="X-ray"/>
    <property type="resolution" value="2.40 A"/>
    <property type="chains" value="F=1-514"/>
</dbReference>
<dbReference type="PDB" id="3PUW">
    <property type="method" value="X-ray"/>
    <property type="resolution" value="2.30 A"/>
    <property type="chains" value="F=1-514"/>
</dbReference>
<dbReference type="PDB" id="3PUX">
    <property type="method" value="X-ray"/>
    <property type="resolution" value="2.30 A"/>
    <property type="chains" value="F=1-514"/>
</dbReference>
<dbReference type="PDB" id="3PUY">
    <property type="method" value="X-ray"/>
    <property type="resolution" value="3.10 A"/>
    <property type="chains" value="F=1-514"/>
</dbReference>
<dbReference type="PDB" id="3PUZ">
    <property type="method" value="X-ray"/>
    <property type="resolution" value="2.90 A"/>
    <property type="chains" value="F=1-514"/>
</dbReference>
<dbReference type="PDB" id="3PV0">
    <property type="method" value="X-ray"/>
    <property type="resolution" value="3.10 A"/>
    <property type="chains" value="F=1-514"/>
</dbReference>
<dbReference type="PDB" id="3RLF">
    <property type="method" value="X-ray"/>
    <property type="resolution" value="2.20 A"/>
    <property type="chains" value="F=1-514"/>
</dbReference>
<dbReference type="PDB" id="4JBW">
    <property type="method" value="X-ray"/>
    <property type="resolution" value="3.91 A"/>
    <property type="chains" value="F/H=1-514"/>
</dbReference>
<dbReference type="PDB" id="4KHZ">
    <property type="method" value="X-ray"/>
    <property type="resolution" value="2.90 A"/>
    <property type="chains" value="F=1-514"/>
</dbReference>
<dbReference type="PDB" id="4KI0">
    <property type="method" value="X-ray"/>
    <property type="resolution" value="2.38 A"/>
    <property type="chains" value="F=1-514"/>
</dbReference>
<dbReference type="PDBsum" id="2R6G"/>
<dbReference type="PDBsum" id="3FH6"/>
<dbReference type="PDBsum" id="3PUV"/>
<dbReference type="PDBsum" id="3PUW"/>
<dbReference type="PDBsum" id="3PUX"/>
<dbReference type="PDBsum" id="3PUY"/>
<dbReference type="PDBsum" id="3PUZ"/>
<dbReference type="PDBsum" id="3PV0"/>
<dbReference type="PDBsum" id="3RLF"/>
<dbReference type="PDBsum" id="4JBW"/>
<dbReference type="PDBsum" id="4KHZ"/>
<dbReference type="PDBsum" id="4KI0"/>
<dbReference type="BMRB" id="P02916"/>
<dbReference type="SMR" id="P02916"/>
<dbReference type="BioGRID" id="4261701">
    <property type="interactions" value="16"/>
</dbReference>
<dbReference type="ComplexPortal" id="CPX-1932">
    <property type="entry name" value="Maltose ABC transporter complex"/>
</dbReference>
<dbReference type="ComplexPortal" id="CPX-1978">
    <property type="entry name" value="Enzyme IIA-maltose transport inhibitory complex"/>
</dbReference>
<dbReference type="DIP" id="DIP-10142N"/>
<dbReference type="FunCoup" id="P02916">
    <property type="interactions" value="197"/>
</dbReference>
<dbReference type="IntAct" id="P02916">
    <property type="interactions" value="7"/>
</dbReference>
<dbReference type="STRING" id="511145.b4033"/>
<dbReference type="TCDB" id="3.A.1.1.1">
    <property type="family name" value="the atp-binding cassette (abc) superfamily"/>
</dbReference>
<dbReference type="jPOST" id="P02916"/>
<dbReference type="PaxDb" id="511145-b4033"/>
<dbReference type="EnsemblBacteria" id="AAC77003">
    <property type="protein sequence ID" value="AAC77003"/>
    <property type="gene ID" value="b4033"/>
</dbReference>
<dbReference type="GeneID" id="948532"/>
<dbReference type="KEGG" id="ecj:JW3993"/>
<dbReference type="KEGG" id="eco:b4033"/>
<dbReference type="PATRIC" id="fig|511145.12.peg.4148"/>
<dbReference type="EchoBASE" id="EB0550"/>
<dbReference type="eggNOG" id="COG1175">
    <property type="taxonomic scope" value="Bacteria"/>
</dbReference>
<dbReference type="HOGENOM" id="CLU_016047_20_0_6"/>
<dbReference type="InParanoid" id="P02916"/>
<dbReference type="OMA" id="IITQNRQ"/>
<dbReference type="OrthoDB" id="9785347at2"/>
<dbReference type="PhylomeDB" id="P02916"/>
<dbReference type="BioCyc" id="EcoCyc:MALF-MONOMER"/>
<dbReference type="BioCyc" id="MetaCyc:MALF-MONOMER"/>
<dbReference type="BRENDA" id="7.5.2.1">
    <property type="organism ID" value="2026"/>
</dbReference>
<dbReference type="EvolutionaryTrace" id="P02916"/>
<dbReference type="PRO" id="PR:P02916"/>
<dbReference type="Proteomes" id="UP000000625">
    <property type="component" value="Chromosome"/>
</dbReference>
<dbReference type="GO" id="GO:0043190">
    <property type="term" value="C:ATP-binding cassette (ABC) transporter complex"/>
    <property type="evidence" value="ECO:0000314"/>
    <property type="project" value="EcoCyc"/>
</dbReference>
<dbReference type="GO" id="GO:1990154">
    <property type="term" value="C:enzyme IIA-maltose transporter complex"/>
    <property type="evidence" value="ECO:0000353"/>
    <property type="project" value="ComplexPortal"/>
</dbReference>
<dbReference type="GO" id="GO:1990060">
    <property type="term" value="C:maltose transport complex"/>
    <property type="evidence" value="ECO:0000314"/>
    <property type="project" value="EcoCyc"/>
</dbReference>
<dbReference type="GO" id="GO:0016020">
    <property type="term" value="C:membrane"/>
    <property type="evidence" value="ECO:0000314"/>
    <property type="project" value="UniProtKB"/>
</dbReference>
<dbReference type="GO" id="GO:0005886">
    <property type="term" value="C:plasma membrane"/>
    <property type="evidence" value="ECO:0000314"/>
    <property type="project" value="EcoCyc"/>
</dbReference>
<dbReference type="GO" id="GO:0015423">
    <property type="term" value="F:ABC-type maltose transporter activity"/>
    <property type="evidence" value="ECO:0000314"/>
    <property type="project" value="EcoCyc"/>
</dbReference>
<dbReference type="GO" id="GO:0006974">
    <property type="term" value="P:DNA damage response"/>
    <property type="evidence" value="ECO:0000270"/>
    <property type="project" value="EcoliWiki"/>
</dbReference>
<dbReference type="GO" id="GO:0042956">
    <property type="term" value="P:maltodextrin transmembrane transport"/>
    <property type="evidence" value="ECO:0000314"/>
    <property type="project" value="ComplexPortal"/>
</dbReference>
<dbReference type="GO" id="GO:0015768">
    <property type="term" value="P:maltose transport"/>
    <property type="evidence" value="ECO:0000314"/>
    <property type="project" value="EcoCyc"/>
</dbReference>
<dbReference type="GO" id="GO:1902344">
    <property type="term" value="P:negative regulation of maltose transport"/>
    <property type="evidence" value="ECO:0000303"/>
    <property type="project" value="ComplexPortal"/>
</dbReference>
<dbReference type="GO" id="GO:0034763">
    <property type="term" value="P:negative regulation of transmembrane transport"/>
    <property type="evidence" value="ECO:0000303"/>
    <property type="project" value="ComplexPortal"/>
</dbReference>
<dbReference type="CDD" id="cd06261">
    <property type="entry name" value="TM_PBP2"/>
    <property type="match status" value="1"/>
</dbReference>
<dbReference type="FunFam" id="1.10.3720.10:FF:000030">
    <property type="entry name" value="Maltose ABC transporter permease MalF"/>
    <property type="match status" value="1"/>
</dbReference>
<dbReference type="FunFam" id="1.20.58.370:FF:000001">
    <property type="entry name" value="Maltose ABC transporter permease MalF"/>
    <property type="match status" value="1"/>
</dbReference>
<dbReference type="FunFam" id="2.40.430.10:FF:000001">
    <property type="entry name" value="Maltose ABC transporter permease MalF"/>
    <property type="match status" value="1"/>
</dbReference>
<dbReference type="Gene3D" id="2.40.430.10">
    <property type="entry name" value="D-maltodextrin-binding protein, MBP"/>
    <property type="match status" value="1"/>
</dbReference>
<dbReference type="Gene3D" id="1.20.58.370">
    <property type="entry name" value="MalF N-terminal region-like"/>
    <property type="match status" value="1"/>
</dbReference>
<dbReference type="Gene3D" id="3.10.650.10">
    <property type="entry name" value="MalF N-terminal region-like"/>
    <property type="match status" value="1"/>
</dbReference>
<dbReference type="Gene3D" id="1.10.3720.10">
    <property type="entry name" value="MetI-like"/>
    <property type="match status" value="1"/>
</dbReference>
<dbReference type="InterPro" id="IPR035277">
    <property type="entry name" value="MalF_N"/>
</dbReference>
<dbReference type="InterPro" id="IPR048464">
    <property type="entry name" value="MalF_N_TM"/>
</dbReference>
<dbReference type="InterPro" id="IPR029345">
    <property type="entry name" value="MalF_P2"/>
</dbReference>
<dbReference type="InterPro" id="IPR047103">
    <property type="entry name" value="MalF_P2_sf"/>
</dbReference>
<dbReference type="InterPro" id="IPR000515">
    <property type="entry name" value="MetI-like"/>
</dbReference>
<dbReference type="InterPro" id="IPR035906">
    <property type="entry name" value="MetI-like_sf"/>
</dbReference>
<dbReference type="NCBIfam" id="NF008232">
    <property type="entry name" value="PRK10999.1"/>
    <property type="match status" value="1"/>
</dbReference>
<dbReference type="PANTHER" id="PTHR47314">
    <property type="entry name" value="MALTOSE/MALTODEXTRIN TRANSPORT SYSTEM PERMEASE PROTEIN MALF"/>
    <property type="match status" value="1"/>
</dbReference>
<dbReference type="PANTHER" id="PTHR47314:SF1">
    <property type="entry name" value="MALTOSE_MALTODEXTRIN TRANSPORT SYSTEM PERMEASE PROTEIN MALF"/>
    <property type="match status" value="1"/>
</dbReference>
<dbReference type="Pfam" id="PF00528">
    <property type="entry name" value="BPD_transp_1"/>
    <property type="match status" value="1"/>
</dbReference>
<dbReference type="Pfam" id="PF20872">
    <property type="entry name" value="MalF_N_TM"/>
    <property type="match status" value="1"/>
</dbReference>
<dbReference type="Pfam" id="PF14785">
    <property type="entry name" value="MalF_P2"/>
    <property type="match status" value="1"/>
</dbReference>
<dbReference type="SUPFAM" id="SSF160964">
    <property type="entry name" value="MalF N-terminal region-like"/>
    <property type="match status" value="1"/>
</dbReference>
<dbReference type="SUPFAM" id="SSF161098">
    <property type="entry name" value="MetI-like"/>
    <property type="match status" value="1"/>
</dbReference>
<dbReference type="PROSITE" id="PS50928">
    <property type="entry name" value="ABC_TM1"/>
    <property type="match status" value="1"/>
</dbReference>
<proteinExistence type="evidence at protein level"/>
<comment type="function">
    <text evidence="4 5">Part of the ABC transporter complex MalEFGK involved in maltose/maltodextrin import. Probably responsible for the translocation of the substrate across the membrane.</text>
</comment>
<comment type="subunit">
    <text evidence="2 3 4 5">The complex is composed of two ATP-binding proteins (MalK), two transmembrane proteins (MalG and MalF) and a solute-binding protein (MalE). Protein stability and stable complex formation require YidC.</text>
</comment>
<comment type="interaction">
    <interactant intactId="EBI-1118919">
        <id>P02916</id>
    </interactant>
    <interactant intactId="EBI-369910">
        <id>P0AEX9</id>
        <label>malE</label>
    </interactant>
    <organismsDiffer>false</organismsDiffer>
    <experiments>5</experiments>
</comment>
<comment type="interaction">
    <interactant intactId="EBI-1118919">
        <id>P02916</id>
    </interactant>
    <interactant intactId="EBI-6400985">
        <id>P68183</id>
        <label>malG</label>
    </interactant>
    <organismsDiffer>false</organismsDiffer>
    <experiments>5</experiments>
</comment>
<comment type="subcellular location">
    <subcellularLocation>
        <location evidence="3">Cell inner membrane</location>
        <topology evidence="1 3">Multi-pass membrane protein</topology>
        <orientation evidence="3">Periplasmic side</orientation>
    </subcellularLocation>
    <text>A substantial portion of it protrudes into the periplasmic space; inserts in an SRP- and Sec-dependent, YidC-independent fashion into the membrane.</text>
</comment>
<comment type="miscellaneous">
    <text>When MalF EAA loop mutations are made concomitantly with MalG EAA loop mutations, a complete loss of transport and complex formation is observed, except for the Gly-407. This suggests that the MalF-MalG interaction may be important for the proper assembly and also for the correct function of the transporter.</text>
</comment>
<comment type="similarity">
    <text evidence="10">Belongs to the binding-protein-dependent transport system permease family. MalFG subfamily.</text>
</comment>
<protein>
    <recommendedName>
        <fullName evidence="10">Maltose/maltodextrin transport system permease protein MalF</fullName>
    </recommendedName>
</protein>
<feature type="chain" id="PRO_0000060068" description="Maltose/maltodextrin transport system permease protein MalF">
    <location>
        <begin position="1"/>
        <end position="514"/>
    </location>
</feature>
<feature type="topological domain" description="Cytoplasmic" evidence="10">
    <location>
        <begin position="1"/>
        <end position="16"/>
    </location>
</feature>
<feature type="transmembrane region" description="Helical" evidence="10">
    <location>
        <begin position="17"/>
        <end position="36"/>
    </location>
</feature>
<feature type="topological domain" description="Periplasmic" evidence="10">
    <location>
        <begin position="37"/>
        <end position="39"/>
    </location>
</feature>
<feature type="transmembrane region" description="Helical" evidence="10">
    <location>
        <begin position="40"/>
        <end position="58"/>
    </location>
</feature>
<feature type="topological domain" description="Cytoplasmic" evidence="10">
    <location>
        <begin position="59"/>
        <end position="66"/>
    </location>
</feature>
<feature type="transmembrane region" description="Helical" evidence="10">
    <location>
        <begin position="67"/>
        <end position="92"/>
    </location>
</feature>
<feature type="topological domain" description="Periplasmic" evidence="10">
    <location>
        <begin position="93"/>
        <end position="275"/>
    </location>
</feature>
<feature type="transmembrane region" description="Helical" evidence="10">
    <location>
        <begin position="276"/>
        <end position="306"/>
    </location>
</feature>
<feature type="topological domain" description="Cytoplasmic" evidence="10">
    <location>
        <begin position="307"/>
        <end position="318"/>
    </location>
</feature>
<feature type="transmembrane region" description="Helical" evidence="10">
    <location>
        <begin position="319"/>
        <end position="336"/>
    </location>
</feature>
<feature type="topological domain" description="Periplasmic" evidence="10">
    <location>
        <begin position="337"/>
        <end position="369"/>
    </location>
</feature>
<feature type="transmembrane region" description="Helical" evidence="10">
    <location>
        <begin position="370"/>
        <end position="392"/>
    </location>
</feature>
<feature type="topological domain" description="Cytoplasmic" evidence="10">
    <location>
        <begin position="393"/>
        <end position="425"/>
    </location>
</feature>
<feature type="transmembrane region" description="Helical" evidence="10">
    <location>
        <begin position="426"/>
        <end position="452"/>
    </location>
</feature>
<feature type="topological domain" description="Periplasmic" evidence="10">
    <location>
        <begin position="453"/>
        <end position="483"/>
    </location>
</feature>
<feature type="transmembrane region" description="Helical" evidence="10">
    <location>
        <begin position="484"/>
        <end position="505"/>
    </location>
</feature>
<feature type="topological domain" description="Cytoplasmic" evidence="10">
    <location>
        <begin position="506"/>
        <end position="514"/>
    </location>
</feature>
<feature type="domain" description="ABC transmembrane type-1" evidence="1">
    <location>
        <begin position="281"/>
        <end position="505"/>
    </location>
</feature>
<feature type="mutagenesis site" description="Ability to transport lactose in a saturable manner." evidence="8">
    <original>L</original>
    <variation>W</variation>
    <location>
        <position position="334"/>
    </location>
</feature>
<feature type="mutagenesis site" description="Growth on maltose but not on media containing either maltoheptaose or maltoheptaose plus maltose." evidence="6">
    <original>L</original>
    <variation>W</variation>
    <location>
        <position position="372"/>
    </location>
</feature>
<feature type="mutagenesis site" description="No growth on maltose." evidence="6">
    <original>N</original>
    <variation>K</variation>
    <variation>H</variation>
    <location>
        <position position="376"/>
    </location>
</feature>
<feature type="mutagenesis site" description="No growth on maltose." evidence="6">
    <original>G</original>
    <variation>C</variation>
    <variation>S</variation>
    <location>
        <position position="380"/>
    </location>
</feature>
<feature type="mutagenesis site" description="Reduction of transport rate." evidence="2 7">
    <original>E</original>
    <variation>A</variation>
    <variation>C</variation>
    <variation>K</variation>
    <variation>L</variation>
    <location>
        <position position="401"/>
    </location>
</feature>
<feature type="mutagenesis site" description="Reduction of transport rate." evidence="2 7">
    <original>S</original>
    <variation>C</variation>
    <variation>D</variation>
    <variation>K</variation>
    <variation>L</variation>
    <location>
        <position position="403"/>
    </location>
</feature>
<feature type="mutagenesis site" description="No effect." evidence="7">
    <original>G</original>
    <variation>A</variation>
    <variation>P</variation>
    <location>
        <position position="407"/>
    </location>
</feature>
<feature type="mutagenesis site" description="No effect." evidence="7">
    <original>P</original>
    <variation>A</variation>
    <location>
        <position position="420"/>
    </location>
</feature>
<feature type="helix" evidence="15">
    <location>
        <begin position="14"/>
        <end position="29"/>
    </location>
</feature>
<feature type="helix" evidence="15">
    <location>
        <begin position="31"/>
        <end position="35"/>
    </location>
</feature>
<feature type="turn" evidence="15">
    <location>
        <begin position="36"/>
        <end position="38"/>
    </location>
</feature>
<feature type="helix" evidence="15">
    <location>
        <begin position="40"/>
        <end position="58"/>
    </location>
</feature>
<feature type="helix" evidence="15">
    <location>
        <begin position="60"/>
        <end position="62"/>
    </location>
</feature>
<feature type="helix" evidence="15">
    <location>
        <begin position="65"/>
        <end position="78"/>
    </location>
</feature>
<feature type="helix" evidence="15">
    <location>
        <begin position="80"/>
        <end position="89"/>
    </location>
</feature>
<feature type="strand" evidence="13">
    <location>
        <begin position="95"/>
        <end position="98"/>
    </location>
</feature>
<feature type="helix" evidence="15">
    <location>
        <begin position="102"/>
        <end position="111"/>
    </location>
</feature>
<feature type="strand" evidence="15">
    <location>
        <begin position="113"/>
        <end position="127"/>
    </location>
</feature>
<feature type="strand" evidence="15">
    <location>
        <begin position="130"/>
        <end position="137"/>
    </location>
</feature>
<feature type="turn" evidence="15">
    <location>
        <begin position="138"/>
        <end position="141"/>
    </location>
</feature>
<feature type="strand" evidence="15">
    <location>
        <begin position="142"/>
        <end position="146"/>
    </location>
</feature>
<feature type="strand" evidence="15">
    <location>
        <begin position="153"/>
        <end position="164"/>
    </location>
</feature>
<feature type="helix" evidence="15">
    <location>
        <begin position="173"/>
        <end position="178"/>
    </location>
</feature>
<feature type="helix" evidence="15">
    <location>
        <begin position="180"/>
        <end position="183"/>
    </location>
</feature>
<feature type="strand" evidence="15">
    <location>
        <begin position="186"/>
        <end position="189"/>
    </location>
</feature>
<feature type="strand" evidence="11">
    <location>
        <begin position="191"/>
        <end position="193"/>
    </location>
</feature>
<feature type="strand" evidence="15">
    <location>
        <begin position="195"/>
        <end position="198"/>
    </location>
</feature>
<feature type="strand" evidence="15">
    <location>
        <begin position="200"/>
        <end position="213"/>
    </location>
</feature>
<feature type="strand" evidence="15">
    <location>
        <begin position="215"/>
        <end position="217"/>
    </location>
</feature>
<feature type="strand" evidence="15">
    <location>
        <begin position="219"/>
        <end position="221"/>
    </location>
</feature>
<feature type="turn" evidence="15">
    <location>
        <begin position="222"/>
        <end position="224"/>
    </location>
</feature>
<feature type="strand" evidence="15">
    <location>
        <begin position="227"/>
        <end position="231"/>
    </location>
</feature>
<feature type="turn" evidence="15">
    <location>
        <begin position="232"/>
        <end position="235"/>
    </location>
</feature>
<feature type="strand" evidence="15">
    <location>
        <begin position="236"/>
        <end position="239"/>
    </location>
</feature>
<feature type="strand" evidence="15">
    <location>
        <begin position="250"/>
        <end position="253"/>
    </location>
</feature>
<feature type="helix" evidence="15">
    <location>
        <begin position="262"/>
        <end position="269"/>
    </location>
</feature>
<feature type="turn" evidence="15">
    <location>
        <begin position="272"/>
        <end position="276"/>
    </location>
</feature>
<feature type="helix" evidence="15">
    <location>
        <begin position="277"/>
        <end position="306"/>
    </location>
</feature>
<feature type="strand" evidence="11">
    <location>
        <begin position="309"/>
        <end position="311"/>
    </location>
</feature>
<feature type="helix" evidence="15">
    <location>
        <begin position="314"/>
        <end position="322"/>
    </location>
</feature>
<feature type="helix" evidence="15">
    <location>
        <begin position="323"/>
        <end position="325"/>
    </location>
</feature>
<feature type="helix" evidence="15">
    <location>
        <begin position="329"/>
        <end position="339"/>
    </location>
</feature>
<feature type="strand" evidence="15">
    <location>
        <begin position="342"/>
        <end position="345"/>
    </location>
</feature>
<feature type="helix" evidence="15">
    <location>
        <begin position="346"/>
        <end position="353"/>
    </location>
</feature>
<feature type="strand" evidence="12">
    <location>
        <begin position="354"/>
        <end position="356"/>
    </location>
</feature>
<feature type="turn" evidence="15">
    <location>
        <begin position="361"/>
        <end position="363"/>
    </location>
</feature>
<feature type="helix" evidence="15">
    <location>
        <begin position="365"/>
        <end position="391"/>
    </location>
</feature>
<feature type="helix" evidence="15">
    <location>
        <begin position="392"/>
        <end position="394"/>
    </location>
</feature>
<feature type="helix" evidence="15">
    <location>
        <begin position="397"/>
        <end position="405"/>
    </location>
</feature>
<feature type="helix" evidence="15">
    <location>
        <begin position="410"/>
        <end position="416"/>
    </location>
</feature>
<feature type="helix" evidence="15">
    <location>
        <begin position="418"/>
        <end position="438"/>
    </location>
</feature>
<feature type="helix" evidence="15">
    <location>
        <begin position="441"/>
        <end position="447"/>
    </location>
</feature>
<feature type="turn" evidence="15">
    <location>
        <begin position="448"/>
        <end position="450"/>
    </location>
</feature>
<feature type="strand" evidence="13">
    <location>
        <begin position="452"/>
        <end position="454"/>
    </location>
</feature>
<feature type="strand" evidence="15">
    <location>
        <begin position="462"/>
        <end position="464"/>
    </location>
</feature>
<feature type="helix" evidence="15">
    <location>
        <begin position="467"/>
        <end position="475"/>
    </location>
</feature>
<feature type="strand" evidence="11">
    <location>
        <begin position="477"/>
        <end position="480"/>
    </location>
</feature>
<feature type="helix" evidence="15">
    <location>
        <begin position="484"/>
        <end position="501"/>
    </location>
</feature>
<feature type="turn" evidence="14">
    <location>
        <begin position="502"/>
        <end position="504"/>
    </location>
</feature>
<keyword id="KW-0002">3D-structure</keyword>
<keyword id="KW-0997">Cell inner membrane</keyword>
<keyword id="KW-1003">Cell membrane</keyword>
<keyword id="KW-0472">Membrane</keyword>
<keyword id="KW-1185">Reference proteome</keyword>
<keyword id="KW-0762">Sugar transport</keyword>
<keyword id="KW-0812">Transmembrane</keyword>
<keyword id="KW-1133">Transmembrane helix</keyword>
<keyword id="KW-0813">Transport</keyword>
<reference key="1">
    <citation type="journal article" date="1984" name="J. Biol. Chem.">
        <title>The nucleotide sequence of the gene for malF protein, an inner membrane component of the maltose transport system of Escherichia coli. Repeated DNA sequences are found in the malE-malF intercistronic region.</title>
        <authorList>
            <person name="Froshauer S."/>
            <person name="Beckwith J."/>
        </authorList>
    </citation>
    <scope>NUCLEOTIDE SEQUENCE [GENOMIC DNA]</scope>
</reference>
<reference key="2">
    <citation type="journal article" date="1993" name="Nucleic Acids Res.">
        <title>Analysis of the Escherichia coli genome. IV. DNA sequence of the region from 89.2 to 92.8 minutes.</title>
        <authorList>
            <person name="Blattner F.R."/>
            <person name="Burland V.D."/>
            <person name="Plunkett G. III"/>
            <person name="Sofia H.J."/>
            <person name="Daniels D.L."/>
        </authorList>
    </citation>
    <scope>NUCLEOTIDE SEQUENCE [LARGE SCALE GENOMIC DNA]</scope>
    <source>
        <strain>K12 / MG1655 / ATCC 47076</strain>
    </source>
</reference>
<reference key="3">
    <citation type="journal article" date="1997" name="Science">
        <title>The complete genome sequence of Escherichia coli K-12.</title>
        <authorList>
            <person name="Blattner F.R."/>
            <person name="Plunkett G. III"/>
            <person name="Bloch C.A."/>
            <person name="Perna N.T."/>
            <person name="Burland V."/>
            <person name="Riley M."/>
            <person name="Collado-Vides J."/>
            <person name="Glasner J.D."/>
            <person name="Rode C.K."/>
            <person name="Mayhew G.F."/>
            <person name="Gregor J."/>
            <person name="Davis N.W."/>
            <person name="Kirkpatrick H.A."/>
            <person name="Goeden M.A."/>
            <person name="Rose D.J."/>
            <person name="Mau B."/>
            <person name="Shao Y."/>
        </authorList>
    </citation>
    <scope>NUCLEOTIDE SEQUENCE [LARGE SCALE GENOMIC DNA]</scope>
    <source>
        <strain>K12 / MG1655 / ATCC 47076</strain>
    </source>
</reference>
<reference key="4">
    <citation type="journal article" date="2006" name="Mol. Syst. Biol.">
        <title>Highly accurate genome sequences of Escherichia coli K-12 strains MG1655 and W3110.</title>
        <authorList>
            <person name="Hayashi K."/>
            <person name="Morooka N."/>
            <person name="Yamamoto Y."/>
            <person name="Fujita K."/>
            <person name="Isono K."/>
            <person name="Choi S."/>
            <person name="Ohtsubo E."/>
            <person name="Baba T."/>
            <person name="Wanner B.L."/>
            <person name="Mori H."/>
            <person name="Horiuchi T."/>
        </authorList>
    </citation>
    <scope>NUCLEOTIDE SEQUENCE [LARGE SCALE GENOMIC DNA]</scope>
    <source>
        <strain>K12 / W3110 / ATCC 27325 / DSM 5911</strain>
    </source>
</reference>
<reference key="5">
    <citation type="journal article" date="1985" name="EMBO J.">
        <title>Sequence of gene malG in E. coli K12: homologies between integral membrane components from binding protein-dependent transport systems.</title>
        <authorList>
            <person name="Dassa E."/>
            <person name="Hofnung M."/>
        </authorList>
    </citation>
    <scope>NUCLEOTIDE SEQUENCE [GENOMIC DNA] OF 469-514</scope>
</reference>
<reference key="6">
    <citation type="journal article" date="1986" name="EMBO J.">
        <title>The distribution of positively charged residues in bacterial inner membrane proteins correlates with the trans-membrane topology.</title>
        <authorList>
            <person name="von Heijne G."/>
        </authorList>
    </citation>
    <scope>TOPOLOGY</scope>
</reference>
<reference key="7">
    <citation type="journal article" date="1990" name="J. Biol. Chem.">
        <title>Overproduction, solubilization, and reconstitution of the maltose transport system from Escherichia coli.</title>
        <authorList>
            <person name="Davidson A.L."/>
            <person name="Nikaido H."/>
        </authorList>
    </citation>
    <scope>FUNCTION</scope>
    <scope>SUBUNIT</scope>
    <source>
        <strain>K12</strain>
    </source>
</reference>
<reference key="8">
    <citation type="journal article" date="1990" name="Proc. Natl. Acad. Sci. U.S.A.">
        <title>Genetic analysis of membrane protein topology by a sandwich gene fusion approach.</title>
        <authorList>
            <person name="Ehrmann M."/>
            <person name="Boyd D."/>
            <person name="Beckwith J."/>
        </authorList>
    </citation>
    <scope>TOPOLOGY</scope>
</reference>
<reference key="9">
    <citation type="journal article" date="1991" name="EMBO J.">
        <title>Decoding signals for membrane protein assembly using alkaline phosphatase fusions.</title>
        <authorList>
            <person name="McGovern K."/>
            <person name="Ehrmann M."/>
            <person name="Beckwith J."/>
        </authorList>
    </citation>
    <scope>TOPOLOGY</scope>
</reference>
<reference key="10">
    <citation type="journal article" date="1991" name="J. Biol. Chem.">
        <title>Purification and characterization of the membrane-associated components of the maltose transport system from Escherichia coli.</title>
        <authorList>
            <person name="Davidson A.L."/>
            <person name="Nikaido H."/>
        </authorList>
    </citation>
    <scope>FUNCTION</scope>
    <scope>SUBUNIT</scope>
</reference>
<reference key="11">
    <citation type="journal article" date="1997" name="EMBO J.">
        <title>Subunit interactions in ABC transporters: a conserved sequence in hydrophobic membrane proteins of periplasmic permeases defines an important site of interaction with the ATPase subunits.</title>
        <authorList>
            <person name="Mourez M."/>
            <person name="Hofnung M."/>
            <person name="Dassa E."/>
        </authorList>
    </citation>
    <scope>MUTAGENESIS OF GLU-401; SER-403; GLY-407 AND PRO-420</scope>
</reference>
<reference key="12">
    <citation type="journal article" date="1997" name="J. Bacteriol.">
        <title>Unliganded maltose-binding protein triggers lactose transport in an Escherichia coli mutant with an alteration in the maltose transport system.</title>
        <authorList>
            <person name="Merino G."/>
            <person name="Shuman H.A."/>
        </authorList>
    </citation>
    <scope>MUTAGENESIS OF LEU-334</scope>
</reference>
<reference key="13">
    <citation type="journal article" date="1996" name="J. Bacteriol.">
        <title>Characterization of transmembrane domains 6, 7, and 8 of MalF by mutational analysis.</title>
        <authorList>
            <person name="Ehrle R."/>
            <person name="Pick C."/>
            <person name="Ulrich R."/>
            <person name="Hofmann E."/>
            <person name="Ehrmann M."/>
        </authorList>
    </citation>
    <scope>MUTAGENESIS OF LEU-372; ASN-376 AND GLY-380</scope>
</reference>
<reference key="14">
    <citation type="journal article" date="2000" name="J. Biol. Chem.">
        <title>ATP modulates subunit-subunit interactions in an ATP-binding cassette transporter (MalFGK2) determined by site-directed chemical cross-linking.</title>
        <authorList>
            <person name="Hunke S."/>
            <person name="Mourez M."/>
            <person name="Jehanno M."/>
            <person name="Dassa E."/>
            <person name="Schneider E."/>
        </authorList>
    </citation>
    <scope>SUBUNIT INTERACTION</scope>
    <scope>MUTAGENESIS OF GLU-401 AND SER-403</scope>
</reference>
<reference key="15">
    <citation type="journal article" date="2005" name="Science">
        <title>Global topology analysis of the Escherichia coli inner membrane proteome.</title>
        <authorList>
            <person name="Daley D.O."/>
            <person name="Rapp M."/>
            <person name="Granseth E."/>
            <person name="Melen K."/>
            <person name="Drew D."/>
            <person name="von Heijne G."/>
        </authorList>
    </citation>
    <scope>TOPOLOGY [LARGE SCALE ANALYSIS]</scope>
    <source>
        <strain>K12 / MG1655 / ATCC 47076</strain>
    </source>
</reference>
<reference key="16">
    <citation type="journal article" date="2008" name="J. Biol. Chem.">
        <title>Biogenesis of MalF and the MalFGK(2) maltose transport complex in Escherichia coli requires YidC.</title>
        <authorList>
            <person name="Wagner S."/>
            <person name="Pop O.I."/>
            <person name="Haan G.J."/>
            <person name="Baars L."/>
            <person name="Koningstein G."/>
            <person name="Klepsch M.M."/>
            <person name="Genevaux P."/>
            <person name="Luirink J."/>
            <person name="de Gier J.W."/>
        </authorList>
    </citation>
    <scope>SUBUNIT</scope>
    <scope>SUBCELLULAR LOCATION</scope>
    <scope>REQUIREMENT FOR YIDC FOR PROTEIN AND COMPLEX FORMATION</scope>
</reference>
<reference key="17">
    <citation type="journal article" date="1998" name="Microbiol. Mol. Biol. Rev.">
        <title>Maltose/maltodextrin system of Escherichia coli: transport, metabolism, and regulation.</title>
        <authorList>
            <person name="Boos W."/>
            <person name="Shuman H."/>
        </authorList>
    </citation>
    <scope>REVIEW</scope>
</reference>
<name>MALF_ECOLI</name>
<sequence length="514" mass="57013">MDVIKKKHWWQSDALKWSVLGLLGLLVGYLVVLMYAQGEYLFAITTLILSSAGLYIFANRKAYAWRYVYPGMAGMGLFVLFPLVCTIAIAFTNYSSTNQLTFERAQEVLLDRSWQAGKTYNFGLYPAGDEWQLALSDGETGKNYLSDAFKFGGEQKLQLKETTAQPEGERANLRVITQNRQALSDITAILPDGNKVMMSSLRQFSGTQPLYTLDGDGTLTNNQSGVKYRPNNQIGFYQSITADGNWGDEKLSPGYTVTTGWKNFTRVFTDEGIQKPFLAIFVWTVVFSLITVFLTVAVGMVLACLVQWEALRGKAVYRVLLILPYAVPSFISILIFKGLFNQSFGEINMMLSALFGVKPAWFSDPTTARTMLIIVNTWLGYPYMMILCMGLLKAIPDDLYEASAMDGAGPFQNFFKITLPLLIKPLTPLMIASFAFNFNNFVLIQLLTNGGPDRLGTTTPAGYTDLLVNYTYRIAFEGGGGQDFGLAAAIATLIFLLVGALAIVNLKATRMKFD</sequence>
<gene>
    <name evidence="9" type="primary">malF</name>
    <name type="ordered locus">b4033</name>
    <name type="ordered locus">JW3993</name>
</gene>